<keyword id="KW-0903">Direct protein sequencing</keyword>
<keyword id="KW-0348">Hemagglutinin</keyword>
<keyword id="KW-0430">Lectin</keyword>
<accession>C0HJV2</accession>
<organism evidence="2">
    <name type="scientific">Luffa acutangula</name>
    <name type="common">Ridged gourd</name>
    <name type="synonym">Cucumis acutangulus</name>
    <dbReference type="NCBI Taxonomy" id="56866"/>
    <lineage>
        <taxon>Eukaryota</taxon>
        <taxon>Viridiplantae</taxon>
        <taxon>Streptophyta</taxon>
        <taxon>Embryophyta</taxon>
        <taxon>Tracheophyta</taxon>
        <taxon>Spermatophyta</taxon>
        <taxon>Magnoliopsida</taxon>
        <taxon>eudicotyledons</taxon>
        <taxon>Gunneridae</taxon>
        <taxon>Pentapetalae</taxon>
        <taxon>rosids</taxon>
        <taxon>fabids</taxon>
        <taxon>Cucurbitales</taxon>
        <taxon>Cucurbitaceae</taxon>
        <taxon>Sicyoeae</taxon>
        <taxon>Luffa</taxon>
    </lineage>
</organism>
<name>LEC_LUFAC</name>
<comment type="function">
    <text evidence="1">Binds chito-oligosaccherides. Has hemagglutinating activity towards rabbit erythrocytes.</text>
</comment>
<comment type="subunit">
    <text evidence="1">Homodimer; non-covalently linked.</text>
</comment>
<comment type="mass spectrometry" mass="23270.0" error="2.0" method="MALDI" evidence="1"/>
<dbReference type="SMR" id="C0HJV2"/>
<dbReference type="GO" id="GO:0030246">
    <property type="term" value="F:carbohydrate binding"/>
    <property type="evidence" value="ECO:0007669"/>
    <property type="project" value="UniProtKB-KW"/>
</dbReference>
<dbReference type="InterPro" id="IPR025886">
    <property type="entry name" value="PP2-like"/>
</dbReference>
<dbReference type="InterPro" id="IPR052147">
    <property type="entry name" value="PP2-like/Lectin"/>
</dbReference>
<dbReference type="PANTHER" id="PTHR48478">
    <property type="entry name" value="LECTIN-LIKE"/>
    <property type="match status" value="1"/>
</dbReference>
<dbReference type="PANTHER" id="PTHR48478:SF1">
    <property type="entry name" value="LECTIN-LIKE"/>
    <property type="match status" value="1"/>
</dbReference>
<dbReference type="Pfam" id="PF14299">
    <property type="entry name" value="PP2"/>
    <property type="match status" value="1"/>
</dbReference>
<reference evidence="3" key="1">
    <citation type="journal article" date="2015" name="IUBMB Life">
        <title>Luffa acutangula agglutinin: primary structure determination and identification of a tryptophan residue involved in its carbohydrate-binding activity using mass spectrometry.</title>
        <authorList>
            <person name="Kumar G."/>
            <person name="Mishra P."/>
            <person name="Anantharam V."/>
            <person name="Surolia A."/>
        </authorList>
    </citation>
    <scope>PROTEIN SEQUENCE</scope>
    <scope>FUNCTION</scope>
    <scope>MASS SPECTROMETRY</scope>
    <scope>DIMERIZATION</scope>
    <scope>IDENTIFICATION BY MASS SPECTROMETRY</scope>
    <source>
        <tissue evidence="2">Phloem</tissue>
    </source>
</reference>
<proteinExistence type="evidence at protein level"/>
<sequence length="209" mass="23720">GELVGGEVKVGHNLEAILKGLDVDVYSVPSFIKLYDQVTAGIFLNNRTKRYWFDKNAESNCFMLYARDLLITWSQDKRYWRWNPFQEHGNTLEVAELIDVCWLNIVGNIETSVLSPGISYEAAFEVMLTNSASGWRIPVDVKLKMPDGSEQESQVNLQDKPRGVWFFISVGHFKISVGETIGNIEFSIVQHQEAKRGLLVKGLVIQPKQ</sequence>
<protein>
    <recommendedName>
        <fullName evidence="2">Lectin</fullName>
    </recommendedName>
    <alternativeName>
        <fullName evidence="2">Agglutinin</fullName>
        <shortName evidence="2">LAA</shortName>
    </alternativeName>
</protein>
<evidence type="ECO:0000269" key="1">
    <source>
    </source>
</evidence>
<evidence type="ECO:0000303" key="2">
    <source>
    </source>
</evidence>
<evidence type="ECO:0000305" key="3"/>
<feature type="chain" id="PRO_0000436785" description="Lectin" evidence="1">
    <location>
        <begin position="1"/>
        <end position="209"/>
    </location>
</feature>
<feature type="site" description="Important for carbohydrate binding" evidence="1">
    <location>
        <position position="102"/>
    </location>
</feature>
<feature type="unsure residue" description="L or I" evidence="2">
    <location>
        <position position="3"/>
    </location>
</feature>
<feature type="unsure residue" description="K or Q" evidence="2">
    <location>
        <position position="9"/>
    </location>
</feature>
<feature type="unsure residue" description="L or I" evidence="2">
    <location>
        <position position="14"/>
    </location>
</feature>
<feature type="unsure residue" description="I or L" evidence="2">
    <location>
        <position position="17"/>
    </location>
</feature>
<feature type="unsure residue" description="L or I" evidence="2">
    <location>
        <position position="18"/>
    </location>
</feature>
<feature type="unsure residue" description="K or Q" evidence="2">
    <location>
        <position position="19"/>
    </location>
</feature>
<feature type="unsure residue" description="L or I" evidence="2">
    <location>
        <position position="21"/>
    </location>
</feature>
<feature type="unsure residue" description="I or L" evidence="2">
    <location>
        <position position="32"/>
    </location>
</feature>
<feature type="unsure residue" description="K or Q" evidence="2">
    <location>
        <position position="33"/>
    </location>
</feature>
<feature type="unsure residue" description="L or I" evidence="2">
    <location>
        <position position="34"/>
    </location>
</feature>
<feature type="unsure residue" description="Q or K" evidence="2">
    <location>
        <position position="37"/>
    </location>
</feature>
<feature type="unsure residue" description="I or L" evidence="2">
    <location>
        <position position="42"/>
    </location>
</feature>
<feature type="unsure residue" description="L or I" evidence="2">
    <location>
        <position position="44"/>
    </location>
</feature>
<feature type="unsure residue" description="K or Q" evidence="2">
    <location>
        <position position="49"/>
    </location>
</feature>
<feature type="unsure residue" description="K or Q" evidence="2">
    <location>
        <position position="55"/>
    </location>
</feature>
<feature type="unsure residue" description="L or I" evidence="2">
    <location>
        <position position="64"/>
    </location>
</feature>
<feature type="unsure residue" description="L or I" evidence="2">
    <location>
        <position position="69"/>
    </location>
</feature>
<feature type="unsure residue" description="L or I" evidence="2">
    <location>
        <position position="70"/>
    </location>
</feature>
<feature type="unsure residue" description="I or L" evidence="2">
    <location>
        <position position="71"/>
    </location>
</feature>
<feature type="unsure residue" description="Q or K" evidence="2">
    <location>
        <position position="75"/>
    </location>
</feature>
<feature type="unsure residue" description="K or Q" evidence="2">
    <location>
        <position position="77"/>
    </location>
</feature>
<feature type="unsure residue" description="Q or K" evidence="2">
    <location>
        <position position="86"/>
    </location>
</feature>
<feature type="unsure residue" description="L or I" evidence="2">
    <location>
        <position position="92"/>
    </location>
</feature>
<feature type="unsure residue" description="L or I" evidence="2">
    <location>
        <position position="97"/>
    </location>
</feature>
<feature type="unsure residue" description="I or L" evidence="2">
    <location>
        <position position="98"/>
    </location>
</feature>
<feature type="unsure residue" description="L or I" evidence="2">
    <location>
        <position position="103"/>
    </location>
</feature>
<feature type="unsure residue" description="I or L" evidence="2">
    <location>
        <position position="105"/>
    </location>
</feature>
<feature type="unsure residue" description="I or L" evidence="2">
    <location>
        <position position="109"/>
    </location>
</feature>
<feature type="unsure residue" description="L or I" evidence="2">
    <location>
        <position position="114"/>
    </location>
</feature>
<feature type="unsure residue" description="I or L" evidence="2">
    <location>
        <position position="118"/>
    </location>
</feature>
<feature type="unsure residue" description="L or I" evidence="2">
    <location>
        <position position="128"/>
    </location>
</feature>
<feature type="unsure residue" description="I or L" evidence="2">
    <location>
        <position position="137"/>
    </location>
</feature>
<feature type="unsure residue" description="K or Q" evidence="2">
    <location>
        <position position="142"/>
    </location>
</feature>
<feature type="unsure residue" description="L or I" evidence="2">
    <location>
        <position position="143"/>
    </location>
</feature>
<feature type="unsure residue" description="K or Q" evidence="2">
    <location>
        <position position="144"/>
    </location>
</feature>
<feature type="unsure residue" description="Q or K" evidence="2">
    <location>
        <position position="151"/>
    </location>
</feature>
<feature type="unsure residue" description="Q or K" evidence="2">
    <location>
        <position position="154"/>
    </location>
</feature>
<feature type="unsure residue" description="L or I" evidence="2">
    <location>
        <position position="157"/>
    </location>
</feature>
<feature type="unsure residue" description="Q or K" evidence="2">
    <location>
        <position position="158"/>
    </location>
</feature>
<feature type="unsure residue" description="K or Q" evidence="2">
    <location>
        <position position="160"/>
    </location>
</feature>
<feature type="unsure residue" description="I or L" evidence="2">
    <location>
        <position position="168"/>
    </location>
</feature>
<feature type="unsure residue" description="K or Q" evidence="2">
    <location>
        <position position="174"/>
    </location>
</feature>
<feature type="unsure residue" description="I or L" evidence="2">
    <location>
        <position position="175"/>
    </location>
</feature>
<feature type="unsure residue" description="I or L" evidence="2">
    <location>
        <position position="181"/>
    </location>
</feature>
<feature type="unsure residue" description="I or L" evidence="2">
    <location>
        <position position="184"/>
    </location>
</feature>
<feature type="unsure residue" description="I or L" evidence="2">
    <location>
        <position position="188"/>
    </location>
</feature>
<feature type="unsure residue" description="Q or K" evidence="2">
    <location>
        <position position="190"/>
    </location>
</feature>
<feature type="unsure residue" description="Q or K" evidence="2">
    <location>
        <position position="192"/>
    </location>
</feature>
<feature type="unsure residue" description="K or Q" evidence="2">
    <location>
        <position position="195"/>
    </location>
</feature>
<feature type="unsure residue" description="L or I" evidence="2">
    <location>
        <position position="198"/>
    </location>
</feature>
<feature type="unsure residue" description="L or I" evidence="2">
    <location>
        <position position="199"/>
    </location>
</feature>
<feature type="unsure residue" description="K or Q" evidence="2">
    <location>
        <position position="201"/>
    </location>
</feature>
<feature type="unsure residue" description="L or I" evidence="2">
    <location>
        <position position="203"/>
    </location>
</feature>
<feature type="unsure residue" description="I or L" evidence="2">
    <location>
        <position position="205"/>
    </location>
</feature>
<feature type="unsure residue" description="Q or K" evidence="2">
    <location>
        <position position="206"/>
    </location>
</feature>
<feature type="unsure residue" description="K or Q" evidence="2">
    <location>
        <position position="208"/>
    </location>
</feature>
<feature type="unsure residue" description="Q or K" evidence="2">
    <location>
        <position position="209"/>
    </location>
</feature>